<accession>P47151</accession>
<sequence length="130" mass="13965">MGTDFSASHCANCSAVGFILEPACEPCKRSTLDWPGGASEVSGRYSFAENSSLSSLIASSHSSTPFSADGSLAGVRTDDWKRATHVPLCHRRRGLTNIYLLAQCSIIFTSDPYLSIFLLKTIAAVFSVRV</sequence>
<proteinExistence type="uncertain"/>
<gene>
    <name type="ordered locus">YJR114W</name>
    <name type="ORF">J2024</name>
</gene>
<organism>
    <name type="scientific">Saccharomyces cerevisiae (strain ATCC 204508 / S288c)</name>
    <name type="common">Baker's yeast</name>
    <dbReference type="NCBI Taxonomy" id="559292"/>
    <lineage>
        <taxon>Eukaryota</taxon>
        <taxon>Fungi</taxon>
        <taxon>Dikarya</taxon>
        <taxon>Ascomycota</taxon>
        <taxon>Saccharomycotina</taxon>
        <taxon>Saccharomycetes</taxon>
        <taxon>Saccharomycetales</taxon>
        <taxon>Saccharomycetaceae</taxon>
        <taxon>Saccharomyces</taxon>
    </lineage>
</organism>
<feature type="chain" id="PRO_0000203113" description="Putative uncharacterized protein YJR114W">
    <location>
        <begin position="1"/>
        <end position="130"/>
    </location>
</feature>
<protein>
    <recommendedName>
        <fullName>Putative uncharacterized protein YJR114W</fullName>
    </recommendedName>
</protein>
<evidence type="ECO:0000305" key="1"/>
<evidence type="ECO:0000305" key="2">
    <source>
    </source>
</evidence>
<reference key="1">
    <citation type="journal article" date="1996" name="EMBO J.">
        <title>Complete nucleotide sequence of Saccharomyces cerevisiae chromosome X.</title>
        <authorList>
            <person name="Galibert F."/>
            <person name="Alexandraki D."/>
            <person name="Baur A."/>
            <person name="Boles E."/>
            <person name="Chalwatzis N."/>
            <person name="Chuat J.-C."/>
            <person name="Coster F."/>
            <person name="Cziepluch C."/>
            <person name="de Haan M."/>
            <person name="Domdey H."/>
            <person name="Durand P."/>
            <person name="Entian K.-D."/>
            <person name="Gatius M."/>
            <person name="Goffeau A."/>
            <person name="Grivell L.A."/>
            <person name="Hennemann A."/>
            <person name="Herbert C.J."/>
            <person name="Heumann K."/>
            <person name="Hilger F."/>
            <person name="Hollenberg C.P."/>
            <person name="Huang M.-E."/>
            <person name="Jacq C."/>
            <person name="Jauniaux J.-C."/>
            <person name="Katsoulou C."/>
            <person name="Kirchrath L."/>
            <person name="Kleine K."/>
            <person name="Kordes E."/>
            <person name="Koetter P."/>
            <person name="Liebl S."/>
            <person name="Louis E.J."/>
            <person name="Manus V."/>
            <person name="Mewes H.-W."/>
            <person name="Miosga T."/>
            <person name="Obermaier B."/>
            <person name="Perea J."/>
            <person name="Pohl T.M."/>
            <person name="Portetelle D."/>
            <person name="Pujol A."/>
            <person name="Purnelle B."/>
            <person name="Ramezani Rad M."/>
            <person name="Rasmussen S.W."/>
            <person name="Rose M."/>
            <person name="Rossau R."/>
            <person name="Schaaff-Gerstenschlaeger I."/>
            <person name="Smits P.H.M."/>
            <person name="Scarcez T."/>
            <person name="Soriano N."/>
            <person name="To Van D."/>
            <person name="Tzermia M."/>
            <person name="Van Broekhoven A."/>
            <person name="Vandenbol M."/>
            <person name="Wedler H."/>
            <person name="von Wettstein D."/>
            <person name="Wambutt R."/>
            <person name="Zagulski M."/>
            <person name="Zollner A."/>
            <person name="Karpfinger-Hartl L."/>
        </authorList>
    </citation>
    <scope>NUCLEOTIDE SEQUENCE [LARGE SCALE GENOMIC DNA]</scope>
    <source>
        <strain>ATCC 204508 / S288c</strain>
    </source>
</reference>
<reference key="2">
    <citation type="journal article" date="2014" name="G3 (Bethesda)">
        <title>The reference genome sequence of Saccharomyces cerevisiae: Then and now.</title>
        <authorList>
            <person name="Engel S.R."/>
            <person name="Dietrich F.S."/>
            <person name="Fisk D.G."/>
            <person name="Binkley G."/>
            <person name="Balakrishnan R."/>
            <person name="Costanzo M.C."/>
            <person name="Dwight S.S."/>
            <person name="Hitz B.C."/>
            <person name="Karra K."/>
            <person name="Nash R.S."/>
            <person name="Weng S."/>
            <person name="Wong E.D."/>
            <person name="Lloyd P."/>
            <person name="Skrzypek M.S."/>
            <person name="Miyasato S.R."/>
            <person name="Simison M."/>
            <person name="Cherry J.M."/>
        </authorList>
    </citation>
    <scope>GENOME REANNOTATION</scope>
    <source>
        <strain>ATCC 204508 / S288c</strain>
    </source>
</reference>
<comment type="miscellaneous">
    <text evidence="1">Partially overlaps RSM7.</text>
</comment>
<comment type="caution">
    <text evidence="2">Product of a dubious gene prediction unlikely to encode a functional protein. Because of that it is not part of the S.cerevisiae S288c complete/reference proteome set.</text>
</comment>
<name>YJ84_YEAST</name>
<dbReference type="EMBL" id="Z49613">
    <property type="protein sequence ID" value="CAA89644.1"/>
    <property type="molecule type" value="Genomic_DNA"/>
</dbReference>
<dbReference type="PIR" id="S57137">
    <property type="entry name" value="S57137"/>
</dbReference>
<dbReference type="STRING" id="4932.YJR114W"/>
<dbReference type="PaxDb" id="4932-YJR114W"/>
<dbReference type="EnsemblFungi" id="YJR114W_mRNA">
    <property type="protein sequence ID" value="YJR114W"/>
    <property type="gene ID" value="YJR114W"/>
</dbReference>
<dbReference type="AGR" id="SGD:S000003875"/>
<dbReference type="SGD" id="S000003875">
    <property type="gene designation" value="YJR114W"/>
</dbReference>
<dbReference type="HOGENOM" id="CLU_1939753_0_0_1"/>